<proteinExistence type="inferred from homology"/>
<dbReference type="EC" id="2.7.8.13" evidence="1"/>
<dbReference type="EMBL" id="CP001616">
    <property type="protein sequence ID" value="ACQ92151.1"/>
    <property type="molecule type" value="Genomic_DNA"/>
</dbReference>
<dbReference type="RefSeq" id="WP_012728750.1">
    <property type="nucleotide sequence ID" value="NC_012691.1"/>
</dbReference>
<dbReference type="SMR" id="C4LA22"/>
<dbReference type="STRING" id="595494.Tola_0522"/>
<dbReference type="KEGG" id="tau:Tola_0522"/>
<dbReference type="eggNOG" id="COG0472">
    <property type="taxonomic scope" value="Bacteria"/>
</dbReference>
<dbReference type="HOGENOM" id="CLU_023982_0_0_6"/>
<dbReference type="OrthoDB" id="9805475at2"/>
<dbReference type="UniPathway" id="UPA00219"/>
<dbReference type="Proteomes" id="UP000009073">
    <property type="component" value="Chromosome"/>
</dbReference>
<dbReference type="GO" id="GO:0005886">
    <property type="term" value="C:plasma membrane"/>
    <property type="evidence" value="ECO:0007669"/>
    <property type="project" value="UniProtKB-SubCell"/>
</dbReference>
<dbReference type="GO" id="GO:0046872">
    <property type="term" value="F:metal ion binding"/>
    <property type="evidence" value="ECO:0007669"/>
    <property type="project" value="UniProtKB-KW"/>
</dbReference>
<dbReference type="GO" id="GO:0008963">
    <property type="term" value="F:phospho-N-acetylmuramoyl-pentapeptide-transferase activity"/>
    <property type="evidence" value="ECO:0007669"/>
    <property type="project" value="UniProtKB-UniRule"/>
</dbReference>
<dbReference type="GO" id="GO:0051992">
    <property type="term" value="F:UDP-N-acetylmuramoyl-L-alanyl-D-glutamyl-meso-2,6-diaminopimelyl-D-alanyl-D-alanine:undecaprenyl-phosphate transferase activity"/>
    <property type="evidence" value="ECO:0007669"/>
    <property type="project" value="RHEA"/>
</dbReference>
<dbReference type="GO" id="GO:0051301">
    <property type="term" value="P:cell division"/>
    <property type="evidence" value="ECO:0007669"/>
    <property type="project" value="UniProtKB-KW"/>
</dbReference>
<dbReference type="GO" id="GO:0071555">
    <property type="term" value="P:cell wall organization"/>
    <property type="evidence" value="ECO:0007669"/>
    <property type="project" value="UniProtKB-KW"/>
</dbReference>
<dbReference type="GO" id="GO:0009252">
    <property type="term" value="P:peptidoglycan biosynthetic process"/>
    <property type="evidence" value="ECO:0007669"/>
    <property type="project" value="UniProtKB-UniRule"/>
</dbReference>
<dbReference type="GO" id="GO:0008360">
    <property type="term" value="P:regulation of cell shape"/>
    <property type="evidence" value="ECO:0007669"/>
    <property type="project" value="UniProtKB-KW"/>
</dbReference>
<dbReference type="CDD" id="cd06852">
    <property type="entry name" value="GT_MraY"/>
    <property type="match status" value="1"/>
</dbReference>
<dbReference type="HAMAP" id="MF_00038">
    <property type="entry name" value="MraY"/>
    <property type="match status" value="1"/>
</dbReference>
<dbReference type="InterPro" id="IPR000715">
    <property type="entry name" value="Glycosyl_transferase_4"/>
</dbReference>
<dbReference type="InterPro" id="IPR003524">
    <property type="entry name" value="PNAcMuramoyl-5peptid_Trfase"/>
</dbReference>
<dbReference type="InterPro" id="IPR018480">
    <property type="entry name" value="PNAcMuramoyl-5peptid_Trfase_CS"/>
</dbReference>
<dbReference type="NCBIfam" id="TIGR00445">
    <property type="entry name" value="mraY"/>
    <property type="match status" value="1"/>
</dbReference>
<dbReference type="PANTHER" id="PTHR22926">
    <property type="entry name" value="PHOSPHO-N-ACETYLMURAMOYL-PENTAPEPTIDE-TRANSFERASE"/>
    <property type="match status" value="1"/>
</dbReference>
<dbReference type="PANTHER" id="PTHR22926:SF5">
    <property type="entry name" value="PHOSPHO-N-ACETYLMURAMOYL-PENTAPEPTIDE-TRANSFERASE HOMOLOG"/>
    <property type="match status" value="1"/>
</dbReference>
<dbReference type="Pfam" id="PF00953">
    <property type="entry name" value="Glycos_transf_4"/>
    <property type="match status" value="1"/>
</dbReference>
<dbReference type="Pfam" id="PF10555">
    <property type="entry name" value="MraY_sig1"/>
    <property type="match status" value="1"/>
</dbReference>
<dbReference type="PROSITE" id="PS01347">
    <property type="entry name" value="MRAY_1"/>
    <property type="match status" value="1"/>
</dbReference>
<dbReference type="PROSITE" id="PS01348">
    <property type="entry name" value="MRAY_2"/>
    <property type="match status" value="1"/>
</dbReference>
<gene>
    <name evidence="1" type="primary">mraY</name>
    <name type="ordered locus">Tola_0522</name>
</gene>
<sequence>MLVWLAEWLTPHLSFFHVVSYLTFRAIMSILTGLGFALWIGPRLIRRLQLLQIGQVVRNDGPESHFSKAGTPTMGGIMILLSIFLSVILWARLSNPYVWVVLFVLVSFGTIGFIDDYRKVIRKNPDGLIARWKYFWQSAAALVVAFFLYATATTDAQTVLVVPFFKDIMPQLGLLFILMTYFVIVGASNAVNLTDGLDGLAIMPTVMVAAGFALIAWATGNVNFANYLHIPYVANASELMVICTAIIGAGLGFLWFNTYPAQVFMGDVGSLALGAILGIIAVLVRQEFLLFIMGGVFVMETMSVILQVGSYKLRGQRIFRMAPIHHHYELKGWPEPRVIVRFWIITLVLVLLGLVTLKLR</sequence>
<feature type="chain" id="PRO_1000202080" description="Phospho-N-acetylmuramoyl-pentapeptide-transferase">
    <location>
        <begin position="1"/>
        <end position="360"/>
    </location>
</feature>
<feature type="transmembrane region" description="Helical" evidence="1">
    <location>
        <begin position="21"/>
        <end position="41"/>
    </location>
</feature>
<feature type="transmembrane region" description="Helical" evidence="1">
    <location>
        <begin position="71"/>
        <end position="91"/>
    </location>
</feature>
<feature type="transmembrane region" description="Helical" evidence="1">
    <location>
        <begin position="94"/>
        <end position="114"/>
    </location>
</feature>
<feature type="transmembrane region" description="Helical" evidence="1">
    <location>
        <begin position="142"/>
        <end position="162"/>
    </location>
</feature>
<feature type="transmembrane region" description="Helical" evidence="1">
    <location>
        <begin position="168"/>
        <end position="188"/>
    </location>
</feature>
<feature type="transmembrane region" description="Helical" evidence="1">
    <location>
        <begin position="199"/>
        <end position="219"/>
    </location>
</feature>
<feature type="transmembrane region" description="Helical" evidence="1">
    <location>
        <begin position="236"/>
        <end position="256"/>
    </location>
</feature>
<feature type="transmembrane region" description="Helical" evidence="1">
    <location>
        <begin position="263"/>
        <end position="283"/>
    </location>
</feature>
<feature type="transmembrane region" description="Helical" evidence="1">
    <location>
        <begin position="288"/>
        <end position="308"/>
    </location>
</feature>
<feature type="transmembrane region" description="Helical" evidence="1">
    <location>
        <begin position="338"/>
        <end position="358"/>
    </location>
</feature>
<evidence type="ECO:0000255" key="1">
    <source>
        <dbReference type="HAMAP-Rule" id="MF_00038"/>
    </source>
</evidence>
<accession>C4LA22</accession>
<organism>
    <name type="scientific">Tolumonas auensis (strain DSM 9187 / NBRC 110442 / TA 4)</name>
    <dbReference type="NCBI Taxonomy" id="595494"/>
    <lineage>
        <taxon>Bacteria</taxon>
        <taxon>Pseudomonadati</taxon>
        <taxon>Pseudomonadota</taxon>
        <taxon>Gammaproteobacteria</taxon>
        <taxon>Aeromonadales</taxon>
        <taxon>Aeromonadaceae</taxon>
        <taxon>Tolumonas</taxon>
    </lineage>
</organism>
<comment type="function">
    <text evidence="1">Catalyzes the initial step of the lipid cycle reactions in the biosynthesis of the cell wall peptidoglycan: transfers peptidoglycan precursor phospho-MurNAc-pentapeptide from UDP-MurNAc-pentapeptide onto the lipid carrier undecaprenyl phosphate, yielding undecaprenyl-pyrophosphoryl-MurNAc-pentapeptide, known as lipid I.</text>
</comment>
<comment type="catalytic activity">
    <reaction evidence="1">
        <text>UDP-N-acetyl-alpha-D-muramoyl-L-alanyl-gamma-D-glutamyl-meso-2,6-diaminopimeloyl-D-alanyl-D-alanine + di-trans,octa-cis-undecaprenyl phosphate = di-trans,octa-cis-undecaprenyl diphospho-N-acetyl-alpha-D-muramoyl-L-alanyl-D-glutamyl-meso-2,6-diaminopimeloyl-D-alanyl-D-alanine + UMP</text>
        <dbReference type="Rhea" id="RHEA:28386"/>
        <dbReference type="ChEBI" id="CHEBI:57865"/>
        <dbReference type="ChEBI" id="CHEBI:60392"/>
        <dbReference type="ChEBI" id="CHEBI:61386"/>
        <dbReference type="ChEBI" id="CHEBI:61387"/>
        <dbReference type="EC" id="2.7.8.13"/>
    </reaction>
</comment>
<comment type="cofactor">
    <cofactor evidence="1">
        <name>Mg(2+)</name>
        <dbReference type="ChEBI" id="CHEBI:18420"/>
    </cofactor>
</comment>
<comment type="pathway">
    <text evidence="1">Cell wall biogenesis; peptidoglycan biosynthesis.</text>
</comment>
<comment type="subcellular location">
    <subcellularLocation>
        <location evidence="1">Cell inner membrane</location>
        <topology evidence="1">Multi-pass membrane protein</topology>
    </subcellularLocation>
</comment>
<comment type="similarity">
    <text evidence="1">Belongs to the glycosyltransferase 4 family. MraY subfamily.</text>
</comment>
<protein>
    <recommendedName>
        <fullName evidence="1">Phospho-N-acetylmuramoyl-pentapeptide-transferase</fullName>
        <ecNumber evidence="1">2.7.8.13</ecNumber>
    </recommendedName>
    <alternativeName>
        <fullName evidence="1">UDP-MurNAc-pentapeptide phosphotransferase</fullName>
    </alternativeName>
</protein>
<reference key="1">
    <citation type="submission" date="2009-05" db="EMBL/GenBank/DDBJ databases">
        <title>Complete sequence of Tolumonas auensis DSM 9187.</title>
        <authorList>
            <consortium name="US DOE Joint Genome Institute"/>
            <person name="Lucas S."/>
            <person name="Copeland A."/>
            <person name="Lapidus A."/>
            <person name="Glavina del Rio T."/>
            <person name="Tice H."/>
            <person name="Bruce D."/>
            <person name="Goodwin L."/>
            <person name="Pitluck S."/>
            <person name="Chertkov O."/>
            <person name="Brettin T."/>
            <person name="Detter J.C."/>
            <person name="Han C."/>
            <person name="Larimer F."/>
            <person name="Land M."/>
            <person name="Hauser L."/>
            <person name="Kyrpides N."/>
            <person name="Mikhailova N."/>
            <person name="Spring S."/>
            <person name="Beller H."/>
        </authorList>
    </citation>
    <scope>NUCLEOTIDE SEQUENCE [LARGE SCALE GENOMIC DNA]</scope>
    <source>
        <strain>DSM 9187 / NBRC 110442 / TA 4</strain>
    </source>
</reference>
<keyword id="KW-0131">Cell cycle</keyword>
<keyword id="KW-0132">Cell division</keyword>
<keyword id="KW-0997">Cell inner membrane</keyword>
<keyword id="KW-1003">Cell membrane</keyword>
<keyword id="KW-0133">Cell shape</keyword>
<keyword id="KW-0961">Cell wall biogenesis/degradation</keyword>
<keyword id="KW-0460">Magnesium</keyword>
<keyword id="KW-0472">Membrane</keyword>
<keyword id="KW-0479">Metal-binding</keyword>
<keyword id="KW-0573">Peptidoglycan synthesis</keyword>
<keyword id="KW-1185">Reference proteome</keyword>
<keyword id="KW-0808">Transferase</keyword>
<keyword id="KW-0812">Transmembrane</keyword>
<keyword id="KW-1133">Transmembrane helix</keyword>
<name>MRAY_TOLAT</name>